<protein>
    <recommendedName>
        <fullName evidence="1">Protein translocase subunit SecA</fullName>
        <ecNumber evidence="1">7.4.2.8</ecNumber>
    </recommendedName>
</protein>
<reference key="1">
    <citation type="journal article" date="2004" name="J. Infect. Dis.">
        <title>Progress toward characterization of the group A Streptococcus metagenome: complete genome sequence of a macrolide-resistant serotype M6 strain.</title>
        <authorList>
            <person name="Banks D.J."/>
            <person name="Porcella S.F."/>
            <person name="Barbian K.D."/>
            <person name="Beres S.B."/>
            <person name="Philips L.E."/>
            <person name="Voyich J.M."/>
            <person name="DeLeo F.R."/>
            <person name="Martin J.M."/>
            <person name="Somerville G.A."/>
            <person name="Musser J.M."/>
        </authorList>
    </citation>
    <scope>NUCLEOTIDE SEQUENCE [LARGE SCALE GENOMIC DNA]</scope>
    <source>
        <strain>ATCC BAA-946 / MGAS10394</strain>
    </source>
</reference>
<keyword id="KW-0067">ATP-binding</keyword>
<keyword id="KW-1003">Cell membrane</keyword>
<keyword id="KW-0963">Cytoplasm</keyword>
<keyword id="KW-0472">Membrane</keyword>
<keyword id="KW-0479">Metal-binding</keyword>
<keyword id="KW-0547">Nucleotide-binding</keyword>
<keyword id="KW-0653">Protein transport</keyword>
<keyword id="KW-1278">Translocase</keyword>
<keyword id="KW-0811">Translocation</keyword>
<keyword id="KW-0813">Transport</keyword>
<keyword id="KW-0862">Zinc</keyword>
<accession>Q5XAA2</accession>
<name>SECA_STRP6</name>
<sequence length="839" mass="94705">MANILRKVIENDKGELRKLEKIAKKVESYADQMASLSDRDLQGKTLEFKERYQKGETLEQLLPEAFAVVREAAKRVLGLFPYRVQIMGGIVLHNGDVPEMRTGEGKTLTATMPVYLNAIAGEGVHVITVNEYLSTRDATEMGEVYSWLGLSVGINLAAKSPAEKREAYNCDITYSTNSEVGFDYLRDNMVVRQEDMVQRPLNFALVDEVDSVLIDEARTPLIVSGAVSSETNQLYIRADMFVKTLTSVDYVIDVPTKTIGLSDSGIDKAESYFNLSNLYDIENVALTHFIDNALRANYIMLLDIDYVVSEDGEILIVDQFTGRTMEGRRFSDGLHQAIEAKEGVRIQEESKTSASITYQNMFRMYKKLAGMTGTAKTEEEEFREVYNMRIIPIPTNRPIARIDHTDLLYPTLESKFRAVVEDVKTRHAKGQPILVGTVAVETSDLISRKLVEAGIPHEVLNAKNHFKEAQIIMNAGQRGAVTIATNMAGRGTDIKLGEGVRELGGLCVIGTERHESRRIDNQLRGRSGRQGDPGESQFYLSLEDDLMRRFGSDRIKAFLDRMKLDEEDTVIKSGMLGRQVESAQKRVEGNNYDTRKQVLQYDDVMREQREIIYANRRDVITANRDLGPEIKAMIKRTIDRAVDAHARSNRKDAIDAIVTFARTSLVPEESISAKELRGLKDDQIKEKLYQRALAIYDQQLSKLRDQEAIIEFQKVLILMIVDNKWTEHIDALDQLRNAVGLRGYAQNNPVVEYQAEGFKMFQDMIGAIEFDVTRTMMKAQIHEQERERASQRATTAAPQNIQSQQSANTDDLPKVERNEACPCGSGKKFKNCHGRKSFS</sequence>
<organism>
    <name type="scientific">Streptococcus pyogenes serotype M6 (strain ATCC BAA-946 / MGAS10394)</name>
    <dbReference type="NCBI Taxonomy" id="286636"/>
    <lineage>
        <taxon>Bacteria</taxon>
        <taxon>Bacillati</taxon>
        <taxon>Bacillota</taxon>
        <taxon>Bacilli</taxon>
        <taxon>Lactobacillales</taxon>
        <taxon>Streptococcaceae</taxon>
        <taxon>Streptococcus</taxon>
    </lineage>
</organism>
<evidence type="ECO:0000255" key="1">
    <source>
        <dbReference type="HAMAP-Rule" id="MF_01382"/>
    </source>
</evidence>
<evidence type="ECO:0000256" key="2">
    <source>
        <dbReference type="SAM" id="MobiDB-lite"/>
    </source>
</evidence>
<proteinExistence type="inferred from homology"/>
<dbReference type="EC" id="7.4.2.8" evidence="1"/>
<dbReference type="EMBL" id="CP000003">
    <property type="protein sequence ID" value="AAT87661.1"/>
    <property type="molecule type" value="Genomic_DNA"/>
</dbReference>
<dbReference type="RefSeq" id="WP_002988523.1">
    <property type="nucleotide sequence ID" value="NC_006086.1"/>
</dbReference>
<dbReference type="SMR" id="Q5XAA2"/>
<dbReference type="GeneID" id="69900360"/>
<dbReference type="KEGG" id="spa:M6_Spy1526"/>
<dbReference type="HOGENOM" id="CLU_005314_3_0_9"/>
<dbReference type="Proteomes" id="UP000001167">
    <property type="component" value="Chromosome"/>
</dbReference>
<dbReference type="GO" id="GO:0031522">
    <property type="term" value="C:cell envelope Sec protein transport complex"/>
    <property type="evidence" value="ECO:0007669"/>
    <property type="project" value="TreeGrafter"/>
</dbReference>
<dbReference type="GO" id="GO:0005829">
    <property type="term" value="C:cytosol"/>
    <property type="evidence" value="ECO:0007669"/>
    <property type="project" value="TreeGrafter"/>
</dbReference>
<dbReference type="GO" id="GO:0005886">
    <property type="term" value="C:plasma membrane"/>
    <property type="evidence" value="ECO:0007669"/>
    <property type="project" value="UniProtKB-SubCell"/>
</dbReference>
<dbReference type="GO" id="GO:0005524">
    <property type="term" value="F:ATP binding"/>
    <property type="evidence" value="ECO:0007669"/>
    <property type="project" value="UniProtKB-UniRule"/>
</dbReference>
<dbReference type="GO" id="GO:0046872">
    <property type="term" value="F:metal ion binding"/>
    <property type="evidence" value="ECO:0007669"/>
    <property type="project" value="UniProtKB-KW"/>
</dbReference>
<dbReference type="GO" id="GO:0008564">
    <property type="term" value="F:protein-exporting ATPase activity"/>
    <property type="evidence" value="ECO:0007669"/>
    <property type="project" value="UniProtKB-EC"/>
</dbReference>
<dbReference type="GO" id="GO:0065002">
    <property type="term" value="P:intracellular protein transmembrane transport"/>
    <property type="evidence" value="ECO:0007669"/>
    <property type="project" value="UniProtKB-UniRule"/>
</dbReference>
<dbReference type="GO" id="GO:0017038">
    <property type="term" value="P:protein import"/>
    <property type="evidence" value="ECO:0007669"/>
    <property type="project" value="InterPro"/>
</dbReference>
<dbReference type="GO" id="GO:0006605">
    <property type="term" value="P:protein targeting"/>
    <property type="evidence" value="ECO:0007669"/>
    <property type="project" value="UniProtKB-UniRule"/>
</dbReference>
<dbReference type="GO" id="GO:0043952">
    <property type="term" value="P:protein transport by the Sec complex"/>
    <property type="evidence" value="ECO:0007669"/>
    <property type="project" value="TreeGrafter"/>
</dbReference>
<dbReference type="CDD" id="cd17928">
    <property type="entry name" value="DEXDc_SecA"/>
    <property type="match status" value="1"/>
</dbReference>
<dbReference type="CDD" id="cd18803">
    <property type="entry name" value="SF2_C_secA"/>
    <property type="match status" value="1"/>
</dbReference>
<dbReference type="FunFam" id="1.10.3060.10:FF:000002">
    <property type="entry name" value="Preprotein translocase subunit SecA"/>
    <property type="match status" value="1"/>
</dbReference>
<dbReference type="FunFam" id="3.40.50.300:FF:000429">
    <property type="entry name" value="Preprotein translocase subunit SecA"/>
    <property type="match status" value="1"/>
</dbReference>
<dbReference type="FunFam" id="3.90.1440.10:FF:000001">
    <property type="entry name" value="Preprotein translocase subunit SecA"/>
    <property type="match status" value="1"/>
</dbReference>
<dbReference type="Gene3D" id="1.10.3060.10">
    <property type="entry name" value="Helical scaffold and wing domains of SecA"/>
    <property type="match status" value="1"/>
</dbReference>
<dbReference type="Gene3D" id="3.40.50.300">
    <property type="entry name" value="P-loop containing nucleotide triphosphate hydrolases"/>
    <property type="match status" value="3"/>
</dbReference>
<dbReference type="Gene3D" id="3.90.1440.10">
    <property type="entry name" value="SecA, preprotein cross-linking domain"/>
    <property type="match status" value="1"/>
</dbReference>
<dbReference type="HAMAP" id="MF_01382">
    <property type="entry name" value="SecA"/>
    <property type="match status" value="1"/>
</dbReference>
<dbReference type="InterPro" id="IPR014001">
    <property type="entry name" value="Helicase_ATP-bd"/>
</dbReference>
<dbReference type="InterPro" id="IPR001650">
    <property type="entry name" value="Helicase_C-like"/>
</dbReference>
<dbReference type="InterPro" id="IPR027417">
    <property type="entry name" value="P-loop_NTPase"/>
</dbReference>
<dbReference type="InterPro" id="IPR004027">
    <property type="entry name" value="SEC_C_motif"/>
</dbReference>
<dbReference type="InterPro" id="IPR000185">
    <property type="entry name" value="SecA"/>
</dbReference>
<dbReference type="InterPro" id="IPR020937">
    <property type="entry name" value="SecA_CS"/>
</dbReference>
<dbReference type="InterPro" id="IPR011115">
    <property type="entry name" value="SecA_DEAD"/>
</dbReference>
<dbReference type="InterPro" id="IPR014018">
    <property type="entry name" value="SecA_motor_DEAD"/>
</dbReference>
<dbReference type="InterPro" id="IPR011130">
    <property type="entry name" value="SecA_preprotein_X-link_dom"/>
</dbReference>
<dbReference type="InterPro" id="IPR044722">
    <property type="entry name" value="SecA_SF2_C"/>
</dbReference>
<dbReference type="InterPro" id="IPR011116">
    <property type="entry name" value="SecA_Wing/Scaffold"/>
</dbReference>
<dbReference type="InterPro" id="IPR036266">
    <property type="entry name" value="SecA_Wing/Scaffold_sf"/>
</dbReference>
<dbReference type="InterPro" id="IPR036670">
    <property type="entry name" value="SecA_X-link_sf"/>
</dbReference>
<dbReference type="NCBIfam" id="NF006630">
    <property type="entry name" value="PRK09200.1"/>
    <property type="match status" value="1"/>
</dbReference>
<dbReference type="NCBIfam" id="TIGR00963">
    <property type="entry name" value="secA"/>
    <property type="match status" value="1"/>
</dbReference>
<dbReference type="PANTHER" id="PTHR30612:SF0">
    <property type="entry name" value="CHLOROPLAST PROTEIN-TRANSPORTING ATPASE"/>
    <property type="match status" value="1"/>
</dbReference>
<dbReference type="PANTHER" id="PTHR30612">
    <property type="entry name" value="SECA INNER MEMBRANE COMPONENT OF SEC PROTEIN SECRETION SYSTEM"/>
    <property type="match status" value="1"/>
</dbReference>
<dbReference type="Pfam" id="PF21090">
    <property type="entry name" value="P-loop_SecA"/>
    <property type="match status" value="2"/>
</dbReference>
<dbReference type="Pfam" id="PF02810">
    <property type="entry name" value="SEC-C"/>
    <property type="match status" value="1"/>
</dbReference>
<dbReference type="Pfam" id="PF07517">
    <property type="entry name" value="SecA_DEAD"/>
    <property type="match status" value="1"/>
</dbReference>
<dbReference type="Pfam" id="PF01043">
    <property type="entry name" value="SecA_PP_bind"/>
    <property type="match status" value="1"/>
</dbReference>
<dbReference type="Pfam" id="PF07516">
    <property type="entry name" value="SecA_SW"/>
    <property type="match status" value="1"/>
</dbReference>
<dbReference type="PRINTS" id="PR00906">
    <property type="entry name" value="SECA"/>
</dbReference>
<dbReference type="SMART" id="SM00957">
    <property type="entry name" value="SecA_DEAD"/>
    <property type="match status" value="1"/>
</dbReference>
<dbReference type="SMART" id="SM00958">
    <property type="entry name" value="SecA_PP_bind"/>
    <property type="match status" value="1"/>
</dbReference>
<dbReference type="SUPFAM" id="SSF81886">
    <property type="entry name" value="Helical scaffold and wing domains of SecA"/>
    <property type="match status" value="1"/>
</dbReference>
<dbReference type="SUPFAM" id="SSF52540">
    <property type="entry name" value="P-loop containing nucleoside triphosphate hydrolases"/>
    <property type="match status" value="2"/>
</dbReference>
<dbReference type="SUPFAM" id="SSF81767">
    <property type="entry name" value="Pre-protein crosslinking domain of SecA"/>
    <property type="match status" value="1"/>
</dbReference>
<dbReference type="PROSITE" id="PS01312">
    <property type="entry name" value="SECA"/>
    <property type="match status" value="1"/>
</dbReference>
<dbReference type="PROSITE" id="PS51196">
    <property type="entry name" value="SECA_MOTOR_DEAD"/>
    <property type="match status" value="1"/>
</dbReference>
<gene>
    <name evidence="1" type="primary">secA</name>
    <name type="ordered locus">M6_Spy1526</name>
</gene>
<comment type="function">
    <text evidence="1">Part of the Sec protein translocase complex. Interacts with the SecYEG preprotein conducting channel. Has a central role in coupling the hydrolysis of ATP to the transfer of proteins into and across the cell membrane, serving as an ATP-driven molecular motor driving the stepwise translocation of polypeptide chains across the membrane.</text>
</comment>
<comment type="catalytic activity">
    <reaction evidence="1">
        <text>ATP + H2O + cellular proteinSide 1 = ADP + phosphate + cellular proteinSide 2.</text>
        <dbReference type="EC" id="7.4.2.8"/>
    </reaction>
</comment>
<comment type="cofactor">
    <cofactor evidence="1">
        <name>Zn(2+)</name>
        <dbReference type="ChEBI" id="CHEBI:29105"/>
    </cofactor>
    <text evidence="1">May bind 1 zinc ion per subunit.</text>
</comment>
<comment type="subunit">
    <text evidence="1">Monomer and homodimer. Part of the essential Sec protein translocation apparatus which comprises SecA, SecYEG and auxiliary proteins SecDF. Other proteins may also be involved.</text>
</comment>
<comment type="subcellular location">
    <subcellularLocation>
        <location evidence="1">Cell membrane</location>
        <topology evidence="1">Peripheral membrane protein</topology>
        <orientation evidence="1">Cytoplasmic side</orientation>
    </subcellularLocation>
    <subcellularLocation>
        <location evidence="1">Cytoplasm</location>
    </subcellularLocation>
    <text evidence="1">Distribution is 50-50.</text>
</comment>
<comment type="similarity">
    <text evidence="1">Belongs to the SecA family.</text>
</comment>
<feature type="chain" id="PRO_0000318455" description="Protein translocase subunit SecA">
    <location>
        <begin position="1"/>
        <end position="839"/>
    </location>
</feature>
<feature type="region of interest" description="Disordered" evidence="2">
    <location>
        <begin position="780"/>
        <end position="839"/>
    </location>
</feature>
<feature type="compositionally biased region" description="Basic and acidic residues" evidence="2">
    <location>
        <begin position="780"/>
        <end position="790"/>
    </location>
</feature>
<feature type="compositionally biased region" description="Polar residues" evidence="2">
    <location>
        <begin position="791"/>
        <end position="809"/>
    </location>
</feature>
<feature type="compositionally biased region" description="Basic residues" evidence="2">
    <location>
        <begin position="827"/>
        <end position="839"/>
    </location>
</feature>
<feature type="binding site" evidence="1">
    <location>
        <position position="85"/>
    </location>
    <ligand>
        <name>ATP</name>
        <dbReference type="ChEBI" id="CHEBI:30616"/>
    </ligand>
</feature>
<feature type="binding site" evidence="1">
    <location>
        <begin position="103"/>
        <end position="107"/>
    </location>
    <ligand>
        <name>ATP</name>
        <dbReference type="ChEBI" id="CHEBI:30616"/>
    </ligand>
</feature>
<feature type="binding site" evidence="1">
    <location>
        <position position="493"/>
    </location>
    <ligand>
        <name>ATP</name>
        <dbReference type="ChEBI" id="CHEBI:30616"/>
    </ligand>
</feature>
<feature type="binding site" evidence="1">
    <location>
        <position position="821"/>
    </location>
    <ligand>
        <name>Zn(2+)</name>
        <dbReference type="ChEBI" id="CHEBI:29105"/>
    </ligand>
</feature>
<feature type="binding site" evidence="1">
    <location>
        <position position="823"/>
    </location>
    <ligand>
        <name>Zn(2+)</name>
        <dbReference type="ChEBI" id="CHEBI:29105"/>
    </ligand>
</feature>
<feature type="binding site" evidence="1">
    <location>
        <position position="832"/>
    </location>
    <ligand>
        <name>Zn(2+)</name>
        <dbReference type="ChEBI" id="CHEBI:29105"/>
    </ligand>
</feature>
<feature type="binding site" evidence="1">
    <location>
        <position position="833"/>
    </location>
    <ligand>
        <name>Zn(2+)</name>
        <dbReference type="ChEBI" id="CHEBI:29105"/>
    </ligand>
</feature>